<reference key="1">
    <citation type="journal article" date="2009" name="PLoS Genet.">
        <title>Organised genome dynamics in the Escherichia coli species results in highly diverse adaptive paths.</title>
        <authorList>
            <person name="Touchon M."/>
            <person name="Hoede C."/>
            <person name="Tenaillon O."/>
            <person name="Barbe V."/>
            <person name="Baeriswyl S."/>
            <person name="Bidet P."/>
            <person name="Bingen E."/>
            <person name="Bonacorsi S."/>
            <person name="Bouchier C."/>
            <person name="Bouvet O."/>
            <person name="Calteau A."/>
            <person name="Chiapello H."/>
            <person name="Clermont O."/>
            <person name="Cruveiller S."/>
            <person name="Danchin A."/>
            <person name="Diard M."/>
            <person name="Dossat C."/>
            <person name="Karoui M.E."/>
            <person name="Frapy E."/>
            <person name="Garry L."/>
            <person name="Ghigo J.M."/>
            <person name="Gilles A.M."/>
            <person name="Johnson J."/>
            <person name="Le Bouguenec C."/>
            <person name="Lescat M."/>
            <person name="Mangenot S."/>
            <person name="Martinez-Jehanne V."/>
            <person name="Matic I."/>
            <person name="Nassif X."/>
            <person name="Oztas S."/>
            <person name="Petit M.A."/>
            <person name="Pichon C."/>
            <person name="Rouy Z."/>
            <person name="Ruf C.S."/>
            <person name="Schneider D."/>
            <person name="Tourret J."/>
            <person name="Vacherie B."/>
            <person name="Vallenet D."/>
            <person name="Medigue C."/>
            <person name="Rocha E.P.C."/>
            <person name="Denamur E."/>
        </authorList>
    </citation>
    <scope>NUCLEOTIDE SEQUENCE [LARGE SCALE GENOMIC DNA]</scope>
    <source>
        <strain>ED1a</strain>
    </source>
</reference>
<gene>
    <name evidence="1" type="primary">cmoB</name>
    <name type="ordered locus">ECED1_2140</name>
</gene>
<protein>
    <recommendedName>
        <fullName evidence="1">tRNA U34 carboxymethyltransferase</fullName>
        <ecNumber evidence="1">2.5.1.-</ecNumber>
    </recommendedName>
</protein>
<evidence type="ECO:0000255" key="1">
    <source>
        <dbReference type="HAMAP-Rule" id="MF_01590"/>
    </source>
</evidence>
<sequence>MIDFGNFYSLIAKNHLSHWLETLPAQIANWQREQQHGLFKQWSNAVEFLPEIKPYHLDLLHSVTAESEEPLSAGQIKRIETLMRNLMPWRKGPFSLYGVNIDTEWRSDWKWDRVLPHLSDLTGRTILDVGCGSGYHMWRMIGAGAHLAVGIDPTQLFLCQFEAVRKLLGNDQRAHLLPLGIEQLPALKAFDTVFSMGVLYHRRSPLEHLWQLKDQLVNEGELVLETLVIDGDENTVLVPGDRYAQMRNVYFIPSALALKNWLKKCGFVDIRIADVSVTTTEEQRRTEWMVTESLADFLDPHDPGKTVEGYPAPKRAVLIARKP</sequence>
<comment type="function">
    <text evidence="1">Catalyzes carboxymethyl transfer from carboxy-S-adenosyl-L-methionine (Cx-SAM) to 5-hydroxyuridine (ho5U) to form 5-carboxymethoxyuridine (cmo5U) at position 34 in tRNAs.</text>
</comment>
<comment type="catalytic activity">
    <reaction evidence="1">
        <text>carboxy-S-adenosyl-L-methionine + 5-hydroxyuridine(34) in tRNA = 5-carboxymethoxyuridine(34) in tRNA + S-adenosyl-L-homocysteine + H(+)</text>
        <dbReference type="Rhea" id="RHEA:52848"/>
        <dbReference type="Rhea" id="RHEA-COMP:13381"/>
        <dbReference type="Rhea" id="RHEA-COMP:13383"/>
        <dbReference type="ChEBI" id="CHEBI:15378"/>
        <dbReference type="ChEBI" id="CHEBI:57856"/>
        <dbReference type="ChEBI" id="CHEBI:134278"/>
        <dbReference type="ChEBI" id="CHEBI:136877"/>
        <dbReference type="ChEBI" id="CHEBI:136879"/>
    </reaction>
</comment>
<comment type="subunit">
    <text evidence="1">Homotetramer.</text>
</comment>
<comment type="similarity">
    <text evidence="1">Belongs to the class I-like SAM-binding methyltransferase superfamily. CmoB family.</text>
</comment>
<feature type="chain" id="PRO_1000185694" description="tRNA U34 carboxymethyltransferase">
    <location>
        <begin position="1"/>
        <end position="323"/>
    </location>
</feature>
<feature type="binding site" evidence="1">
    <location>
        <position position="91"/>
    </location>
    <ligand>
        <name>carboxy-S-adenosyl-L-methionine</name>
        <dbReference type="ChEBI" id="CHEBI:134278"/>
    </ligand>
</feature>
<feature type="binding site" evidence="1">
    <location>
        <position position="105"/>
    </location>
    <ligand>
        <name>carboxy-S-adenosyl-L-methionine</name>
        <dbReference type="ChEBI" id="CHEBI:134278"/>
    </ligand>
</feature>
<feature type="binding site" evidence="1">
    <location>
        <position position="110"/>
    </location>
    <ligand>
        <name>carboxy-S-adenosyl-L-methionine</name>
        <dbReference type="ChEBI" id="CHEBI:134278"/>
    </ligand>
</feature>
<feature type="binding site" evidence="1">
    <location>
        <position position="130"/>
    </location>
    <ligand>
        <name>carboxy-S-adenosyl-L-methionine</name>
        <dbReference type="ChEBI" id="CHEBI:134278"/>
    </ligand>
</feature>
<feature type="binding site" evidence="1">
    <location>
        <begin position="152"/>
        <end position="154"/>
    </location>
    <ligand>
        <name>carboxy-S-adenosyl-L-methionine</name>
        <dbReference type="ChEBI" id="CHEBI:134278"/>
    </ligand>
</feature>
<feature type="binding site" evidence="1">
    <location>
        <begin position="181"/>
        <end position="182"/>
    </location>
    <ligand>
        <name>carboxy-S-adenosyl-L-methionine</name>
        <dbReference type="ChEBI" id="CHEBI:134278"/>
    </ligand>
</feature>
<feature type="binding site" evidence="1">
    <location>
        <position position="196"/>
    </location>
    <ligand>
        <name>carboxy-S-adenosyl-L-methionine</name>
        <dbReference type="ChEBI" id="CHEBI:134278"/>
    </ligand>
</feature>
<feature type="binding site" evidence="1">
    <location>
        <position position="200"/>
    </location>
    <ligand>
        <name>carboxy-S-adenosyl-L-methionine</name>
        <dbReference type="ChEBI" id="CHEBI:134278"/>
    </ligand>
</feature>
<feature type="binding site" evidence="1">
    <location>
        <position position="315"/>
    </location>
    <ligand>
        <name>carboxy-S-adenosyl-L-methionine</name>
        <dbReference type="ChEBI" id="CHEBI:134278"/>
    </ligand>
</feature>
<keyword id="KW-0808">Transferase</keyword>
<keyword id="KW-0819">tRNA processing</keyword>
<dbReference type="EC" id="2.5.1.-" evidence="1"/>
<dbReference type="EMBL" id="CU928162">
    <property type="protein sequence ID" value="CAR08331.2"/>
    <property type="molecule type" value="Genomic_DNA"/>
</dbReference>
<dbReference type="RefSeq" id="WP_000564722.1">
    <property type="nucleotide sequence ID" value="NC_011745.1"/>
</dbReference>
<dbReference type="SMR" id="B7MW65"/>
<dbReference type="KEGG" id="ecq:ECED1_2140"/>
<dbReference type="HOGENOM" id="CLU_052665_0_0_6"/>
<dbReference type="Proteomes" id="UP000000748">
    <property type="component" value="Chromosome"/>
</dbReference>
<dbReference type="GO" id="GO:0016765">
    <property type="term" value="F:transferase activity, transferring alkyl or aryl (other than methyl) groups"/>
    <property type="evidence" value="ECO:0007669"/>
    <property type="project" value="UniProtKB-UniRule"/>
</dbReference>
<dbReference type="GO" id="GO:0002098">
    <property type="term" value="P:tRNA wobble uridine modification"/>
    <property type="evidence" value="ECO:0007669"/>
    <property type="project" value="InterPro"/>
</dbReference>
<dbReference type="CDD" id="cd02440">
    <property type="entry name" value="AdoMet_MTases"/>
    <property type="match status" value="1"/>
</dbReference>
<dbReference type="FunFam" id="3.40.50.150:FF:000080">
    <property type="entry name" value="tRNA U34 carboxymethyltransferase"/>
    <property type="match status" value="1"/>
</dbReference>
<dbReference type="Gene3D" id="3.40.50.150">
    <property type="entry name" value="Vaccinia Virus protein VP39"/>
    <property type="match status" value="1"/>
</dbReference>
<dbReference type="HAMAP" id="MF_01590">
    <property type="entry name" value="tRNA_carboxymethyltr_CmoB"/>
    <property type="match status" value="1"/>
</dbReference>
<dbReference type="InterPro" id="IPR010017">
    <property type="entry name" value="CmoB"/>
</dbReference>
<dbReference type="InterPro" id="IPR027555">
    <property type="entry name" value="Mo5U34_MeTrfas-like"/>
</dbReference>
<dbReference type="InterPro" id="IPR029063">
    <property type="entry name" value="SAM-dependent_MTases_sf"/>
</dbReference>
<dbReference type="NCBIfam" id="NF011650">
    <property type="entry name" value="PRK15068.1"/>
    <property type="match status" value="1"/>
</dbReference>
<dbReference type="NCBIfam" id="TIGR00452">
    <property type="entry name" value="tRNA 5-methoxyuridine(34)/uridine 5-oxyacetic acid(34) synthase CmoB"/>
    <property type="match status" value="1"/>
</dbReference>
<dbReference type="PANTHER" id="PTHR43861">
    <property type="entry name" value="TRANS-ACONITATE 2-METHYLTRANSFERASE-RELATED"/>
    <property type="match status" value="1"/>
</dbReference>
<dbReference type="Pfam" id="PF08003">
    <property type="entry name" value="Methyltransf_9"/>
    <property type="match status" value="1"/>
</dbReference>
<dbReference type="SUPFAM" id="SSF53335">
    <property type="entry name" value="S-adenosyl-L-methionine-dependent methyltransferases"/>
    <property type="match status" value="1"/>
</dbReference>
<proteinExistence type="inferred from homology"/>
<accession>B7MW65</accession>
<organism>
    <name type="scientific">Escherichia coli O81 (strain ED1a)</name>
    <dbReference type="NCBI Taxonomy" id="585397"/>
    <lineage>
        <taxon>Bacteria</taxon>
        <taxon>Pseudomonadati</taxon>
        <taxon>Pseudomonadota</taxon>
        <taxon>Gammaproteobacteria</taxon>
        <taxon>Enterobacterales</taxon>
        <taxon>Enterobacteriaceae</taxon>
        <taxon>Escherichia</taxon>
    </lineage>
</organism>
<name>CMOB_ECO81</name>